<sequence length="209" mass="22708">MTQASAKFIVVEGLEGAGKSSAIALIRDFIEKHTGLAPVCTREPGGTPLAERIRDLVKIADPSDPLCDESECLLIYAARAQLVANVIKPALAEGKWVLGDRHNLSSLAYQGGGRGLMPLVEAVSNATLKGFKPDLTLYLDLDPKLGLLRAAKRGELDRIEQQAIDFFERARATYLKLASEDERIVVIDASQTMAEVHKDILAVLQAMAW</sequence>
<name>KTHY_SHESA</name>
<organism>
    <name type="scientific">Shewanella sp. (strain ANA-3)</name>
    <dbReference type="NCBI Taxonomy" id="94122"/>
    <lineage>
        <taxon>Bacteria</taxon>
        <taxon>Pseudomonadati</taxon>
        <taxon>Pseudomonadota</taxon>
        <taxon>Gammaproteobacteria</taxon>
        <taxon>Alteromonadales</taxon>
        <taxon>Shewanellaceae</taxon>
        <taxon>Shewanella</taxon>
    </lineage>
</organism>
<gene>
    <name evidence="1" type="primary">tmk</name>
    <name type="ordered locus">Shewana3_1766</name>
</gene>
<accession>A0KW30</accession>
<evidence type="ECO:0000255" key="1">
    <source>
        <dbReference type="HAMAP-Rule" id="MF_00165"/>
    </source>
</evidence>
<keyword id="KW-0067">ATP-binding</keyword>
<keyword id="KW-0418">Kinase</keyword>
<keyword id="KW-0545">Nucleotide biosynthesis</keyword>
<keyword id="KW-0547">Nucleotide-binding</keyword>
<keyword id="KW-0808">Transferase</keyword>
<dbReference type="EC" id="2.7.4.9" evidence="1"/>
<dbReference type="EMBL" id="CP000469">
    <property type="protein sequence ID" value="ABK47999.1"/>
    <property type="molecule type" value="Genomic_DNA"/>
</dbReference>
<dbReference type="RefSeq" id="WP_011716779.1">
    <property type="nucleotide sequence ID" value="NC_008577.1"/>
</dbReference>
<dbReference type="SMR" id="A0KW30"/>
<dbReference type="STRING" id="94122.Shewana3_1766"/>
<dbReference type="KEGG" id="shn:Shewana3_1766"/>
<dbReference type="eggNOG" id="COG0125">
    <property type="taxonomic scope" value="Bacteria"/>
</dbReference>
<dbReference type="HOGENOM" id="CLU_049131_0_1_6"/>
<dbReference type="OrthoDB" id="9774907at2"/>
<dbReference type="Proteomes" id="UP000002589">
    <property type="component" value="Chromosome"/>
</dbReference>
<dbReference type="GO" id="GO:0005829">
    <property type="term" value="C:cytosol"/>
    <property type="evidence" value="ECO:0007669"/>
    <property type="project" value="TreeGrafter"/>
</dbReference>
<dbReference type="GO" id="GO:0005524">
    <property type="term" value="F:ATP binding"/>
    <property type="evidence" value="ECO:0007669"/>
    <property type="project" value="UniProtKB-UniRule"/>
</dbReference>
<dbReference type="GO" id="GO:0004798">
    <property type="term" value="F:dTMP kinase activity"/>
    <property type="evidence" value="ECO:0007669"/>
    <property type="project" value="UniProtKB-UniRule"/>
</dbReference>
<dbReference type="GO" id="GO:0006233">
    <property type="term" value="P:dTDP biosynthetic process"/>
    <property type="evidence" value="ECO:0007669"/>
    <property type="project" value="InterPro"/>
</dbReference>
<dbReference type="GO" id="GO:0006235">
    <property type="term" value="P:dTTP biosynthetic process"/>
    <property type="evidence" value="ECO:0007669"/>
    <property type="project" value="UniProtKB-UniRule"/>
</dbReference>
<dbReference type="GO" id="GO:0006227">
    <property type="term" value="P:dUDP biosynthetic process"/>
    <property type="evidence" value="ECO:0007669"/>
    <property type="project" value="TreeGrafter"/>
</dbReference>
<dbReference type="CDD" id="cd01672">
    <property type="entry name" value="TMPK"/>
    <property type="match status" value="1"/>
</dbReference>
<dbReference type="FunFam" id="3.40.50.300:FF:000321">
    <property type="entry name" value="Thymidylate kinase"/>
    <property type="match status" value="1"/>
</dbReference>
<dbReference type="Gene3D" id="3.40.50.300">
    <property type="entry name" value="P-loop containing nucleotide triphosphate hydrolases"/>
    <property type="match status" value="1"/>
</dbReference>
<dbReference type="HAMAP" id="MF_00165">
    <property type="entry name" value="Thymidylate_kinase"/>
    <property type="match status" value="1"/>
</dbReference>
<dbReference type="InterPro" id="IPR027417">
    <property type="entry name" value="P-loop_NTPase"/>
</dbReference>
<dbReference type="InterPro" id="IPR039430">
    <property type="entry name" value="Thymidylate_kin-like_dom"/>
</dbReference>
<dbReference type="InterPro" id="IPR018095">
    <property type="entry name" value="Thymidylate_kin_CS"/>
</dbReference>
<dbReference type="InterPro" id="IPR018094">
    <property type="entry name" value="Thymidylate_kinase"/>
</dbReference>
<dbReference type="NCBIfam" id="TIGR00041">
    <property type="entry name" value="DTMP_kinase"/>
    <property type="match status" value="1"/>
</dbReference>
<dbReference type="PANTHER" id="PTHR10344">
    <property type="entry name" value="THYMIDYLATE KINASE"/>
    <property type="match status" value="1"/>
</dbReference>
<dbReference type="PANTHER" id="PTHR10344:SF4">
    <property type="entry name" value="UMP-CMP KINASE 2, MITOCHONDRIAL"/>
    <property type="match status" value="1"/>
</dbReference>
<dbReference type="Pfam" id="PF02223">
    <property type="entry name" value="Thymidylate_kin"/>
    <property type="match status" value="1"/>
</dbReference>
<dbReference type="SUPFAM" id="SSF52540">
    <property type="entry name" value="P-loop containing nucleoside triphosphate hydrolases"/>
    <property type="match status" value="1"/>
</dbReference>
<dbReference type="PROSITE" id="PS01331">
    <property type="entry name" value="THYMIDYLATE_KINASE"/>
    <property type="match status" value="1"/>
</dbReference>
<protein>
    <recommendedName>
        <fullName evidence="1">Thymidylate kinase</fullName>
        <ecNumber evidence="1">2.7.4.9</ecNumber>
    </recommendedName>
    <alternativeName>
        <fullName evidence="1">dTMP kinase</fullName>
    </alternativeName>
</protein>
<reference key="1">
    <citation type="submission" date="2006-09" db="EMBL/GenBank/DDBJ databases">
        <title>Complete sequence of chromosome 1 of Shewanella sp. ANA-3.</title>
        <authorList>
            <person name="Copeland A."/>
            <person name="Lucas S."/>
            <person name="Lapidus A."/>
            <person name="Barry K."/>
            <person name="Detter J.C."/>
            <person name="Glavina del Rio T."/>
            <person name="Hammon N."/>
            <person name="Israni S."/>
            <person name="Dalin E."/>
            <person name="Tice H."/>
            <person name="Pitluck S."/>
            <person name="Chertkov O."/>
            <person name="Brettin T."/>
            <person name="Bruce D."/>
            <person name="Han C."/>
            <person name="Tapia R."/>
            <person name="Gilna P."/>
            <person name="Schmutz J."/>
            <person name="Larimer F."/>
            <person name="Land M."/>
            <person name="Hauser L."/>
            <person name="Kyrpides N."/>
            <person name="Kim E."/>
            <person name="Newman D."/>
            <person name="Salticov C."/>
            <person name="Konstantinidis K."/>
            <person name="Klappenback J."/>
            <person name="Tiedje J."/>
            <person name="Richardson P."/>
        </authorList>
    </citation>
    <scope>NUCLEOTIDE SEQUENCE [LARGE SCALE GENOMIC DNA]</scope>
    <source>
        <strain>ANA-3</strain>
    </source>
</reference>
<proteinExistence type="inferred from homology"/>
<comment type="function">
    <text evidence="1">Phosphorylation of dTMP to form dTDP in both de novo and salvage pathways of dTTP synthesis.</text>
</comment>
<comment type="catalytic activity">
    <reaction evidence="1">
        <text>dTMP + ATP = dTDP + ADP</text>
        <dbReference type="Rhea" id="RHEA:13517"/>
        <dbReference type="ChEBI" id="CHEBI:30616"/>
        <dbReference type="ChEBI" id="CHEBI:58369"/>
        <dbReference type="ChEBI" id="CHEBI:63528"/>
        <dbReference type="ChEBI" id="CHEBI:456216"/>
        <dbReference type="EC" id="2.7.4.9"/>
    </reaction>
</comment>
<comment type="similarity">
    <text evidence="1">Belongs to the thymidylate kinase family.</text>
</comment>
<feature type="chain" id="PRO_1000023278" description="Thymidylate kinase">
    <location>
        <begin position="1"/>
        <end position="209"/>
    </location>
</feature>
<feature type="binding site" evidence="1">
    <location>
        <begin position="13"/>
        <end position="20"/>
    </location>
    <ligand>
        <name>ATP</name>
        <dbReference type="ChEBI" id="CHEBI:30616"/>
    </ligand>
</feature>